<protein>
    <recommendedName>
        <fullName evidence="1">Large ribosomal subunit protein bL12</fullName>
    </recommendedName>
    <alternativeName>
        <fullName evidence="2">50S ribosomal protein L7/L12</fullName>
    </alternativeName>
</protein>
<keyword id="KW-1185">Reference proteome</keyword>
<keyword id="KW-0687">Ribonucleoprotein</keyword>
<keyword id="KW-0689">Ribosomal protein</keyword>
<comment type="function">
    <text evidence="1">Forms part of the ribosomal stalk which helps the ribosome interact with GTP-bound translation factors. Is thus essential for accurate translation.</text>
</comment>
<comment type="subunit">
    <text evidence="1">Homodimer. Part of the ribosomal stalk of the 50S ribosomal subunit. Forms a multimeric L10(L12)X complex, where L10 forms an elongated spine to which 2 to 4 L12 dimers bind in a sequential fashion. Binds GTP-bound translation factors.</text>
</comment>
<comment type="similarity">
    <text evidence="1">Belongs to the bacterial ribosomal protein bL12 family.</text>
</comment>
<accession>B7J458</accession>
<organism>
    <name type="scientific">Acidithiobacillus ferrooxidans (strain ATCC 23270 / DSM 14882 / CIP 104768 / NCIMB 8455)</name>
    <name type="common">Ferrobacillus ferrooxidans (strain ATCC 23270)</name>
    <dbReference type="NCBI Taxonomy" id="243159"/>
    <lineage>
        <taxon>Bacteria</taxon>
        <taxon>Pseudomonadati</taxon>
        <taxon>Pseudomonadota</taxon>
        <taxon>Acidithiobacillia</taxon>
        <taxon>Acidithiobacillales</taxon>
        <taxon>Acidithiobacillaceae</taxon>
        <taxon>Acidithiobacillus</taxon>
    </lineage>
</organism>
<dbReference type="EMBL" id="CP001219">
    <property type="protein sequence ID" value="ACK79753.1"/>
    <property type="molecule type" value="Genomic_DNA"/>
</dbReference>
<dbReference type="RefSeq" id="WP_009568779.1">
    <property type="nucleotide sequence ID" value="NC_011761.1"/>
</dbReference>
<dbReference type="SMR" id="B7J458"/>
<dbReference type="STRING" id="243159.AFE_0318"/>
<dbReference type="PaxDb" id="243159-AFE_0318"/>
<dbReference type="GeneID" id="65279698"/>
<dbReference type="KEGG" id="afr:AFE_0318"/>
<dbReference type="eggNOG" id="COG0222">
    <property type="taxonomic scope" value="Bacteria"/>
</dbReference>
<dbReference type="HOGENOM" id="CLU_086499_3_2_6"/>
<dbReference type="Proteomes" id="UP000001362">
    <property type="component" value="Chromosome"/>
</dbReference>
<dbReference type="GO" id="GO:0022625">
    <property type="term" value="C:cytosolic large ribosomal subunit"/>
    <property type="evidence" value="ECO:0007669"/>
    <property type="project" value="TreeGrafter"/>
</dbReference>
<dbReference type="GO" id="GO:0003729">
    <property type="term" value="F:mRNA binding"/>
    <property type="evidence" value="ECO:0007669"/>
    <property type="project" value="TreeGrafter"/>
</dbReference>
<dbReference type="GO" id="GO:0003735">
    <property type="term" value="F:structural constituent of ribosome"/>
    <property type="evidence" value="ECO:0007669"/>
    <property type="project" value="InterPro"/>
</dbReference>
<dbReference type="GO" id="GO:0006412">
    <property type="term" value="P:translation"/>
    <property type="evidence" value="ECO:0007669"/>
    <property type="project" value="UniProtKB-UniRule"/>
</dbReference>
<dbReference type="CDD" id="cd00387">
    <property type="entry name" value="Ribosomal_L7_L12"/>
    <property type="match status" value="1"/>
</dbReference>
<dbReference type="FunFam" id="3.30.1390.10:FF:000001">
    <property type="entry name" value="50S ribosomal protein L7/L12"/>
    <property type="match status" value="1"/>
</dbReference>
<dbReference type="Gene3D" id="3.30.1390.10">
    <property type="match status" value="1"/>
</dbReference>
<dbReference type="Gene3D" id="1.20.5.710">
    <property type="entry name" value="Single helix bin"/>
    <property type="match status" value="1"/>
</dbReference>
<dbReference type="HAMAP" id="MF_00368">
    <property type="entry name" value="Ribosomal_bL12"/>
    <property type="match status" value="1"/>
</dbReference>
<dbReference type="InterPro" id="IPR000206">
    <property type="entry name" value="Ribosomal_bL12"/>
</dbReference>
<dbReference type="InterPro" id="IPR013823">
    <property type="entry name" value="Ribosomal_bL12_C"/>
</dbReference>
<dbReference type="InterPro" id="IPR014719">
    <property type="entry name" value="Ribosomal_bL12_C/ClpS-like"/>
</dbReference>
<dbReference type="InterPro" id="IPR008932">
    <property type="entry name" value="Ribosomal_bL12_oligo"/>
</dbReference>
<dbReference type="InterPro" id="IPR036235">
    <property type="entry name" value="Ribosomal_bL12_oligo_N_sf"/>
</dbReference>
<dbReference type="NCBIfam" id="TIGR00855">
    <property type="entry name" value="L12"/>
    <property type="match status" value="1"/>
</dbReference>
<dbReference type="PANTHER" id="PTHR45987">
    <property type="entry name" value="39S RIBOSOMAL PROTEIN L12"/>
    <property type="match status" value="1"/>
</dbReference>
<dbReference type="PANTHER" id="PTHR45987:SF4">
    <property type="entry name" value="LARGE RIBOSOMAL SUBUNIT PROTEIN BL12M"/>
    <property type="match status" value="1"/>
</dbReference>
<dbReference type="Pfam" id="PF00542">
    <property type="entry name" value="Ribosomal_L12"/>
    <property type="match status" value="1"/>
</dbReference>
<dbReference type="Pfam" id="PF16320">
    <property type="entry name" value="Ribosomal_L12_N"/>
    <property type="match status" value="1"/>
</dbReference>
<dbReference type="SUPFAM" id="SSF54736">
    <property type="entry name" value="ClpS-like"/>
    <property type="match status" value="1"/>
</dbReference>
<dbReference type="SUPFAM" id="SSF48300">
    <property type="entry name" value="Ribosomal protein L7/12, oligomerisation (N-terminal) domain"/>
    <property type="match status" value="1"/>
</dbReference>
<proteinExistence type="inferred from homology"/>
<feature type="chain" id="PRO_1000121379" description="Large ribosomal subunit protein bL12">
    <location>
        <begin position="1"/>
        <end position="128"/>
    </location>
</feature>
<sequence>MALSKAEILDAIAGMTVLELSELIKEMEEKFGVSAAAVAVAAPAGGAAAGEGAAAVEEQTEFDVILTAAGANKVNTIKVVRAITGLGLKEAKDLVDGAPKPVKEGVAKAEAESVKAQLVEAGAEAEIK</sequence>
<evidence type="ECO:0000255" key="1">
    <source>
        <dbReference type="HAMAP-Rule" id="MF_00368"/>
    </source>
</evidence>
<evidence type="ECO:0000305" key="2"/>
<name>RL7_ACIF2</name>
<gene>
    <name evidence="1" type="primary">rplL</name>
    <name type="ordered locus">AFE_0318</name>
</gene>
<reference key="1">
    <citation type="journal article" date="2008" name="BMC Genomics">
        <title>Acidithiobacillus ferrooxidans metabolism: from genome sequence to industrial applications.</title>
        <authorList>
            <person name="Valdes J."/>
            <person name="Pedroso I."/>
            <person name="Quatrini R."/>
            <person name="Dodson R.J."/>
            <person name="Tettelin H."/>
            <person name="Blake R. II"/>
            <person name="Eisen J.A."/>
            <person name="Holmes D.S."/>
        </authorList>
    </citation>
    <scope>NUCLEOTIDE SEQUENCE [LARGE SCALE GENOMIC DNA]</scope>
    <source>
        <strain>ATCC 23270 / DSM 14882 / CIP 104768 / NCIMB 8455</strain>
    </source>
</reference>